<keyword id="KW-0030">Aminoacyl-tRNA synthetase</keyword>
<keyword id="KW-0067">ATP-binding</keyword>
<keyword id="KW-0963">Cytoplasm</keyword>
<keyword id="KW-0436">Ligase</keyword>
<keyword id="KW-0547">Nucleotide-binding</keyword>
<keyword id="KW-0648">Protein biosynthesis</keyword>
<keyword id="KW-1185">Reference proteome</keyword>
<protein>
    <recommendedName>
        <fullName evidence="1">Lysine--tRNA ligase</fullName>
        <ecNumber evidence="1">6.1.1.6</ecNumber>
    </recommendedName>
    <alternativeName>
        <fullName evidence="1">Lysyl-tRNA synthetase</fullName>
        <shortName evidence="1">LysRS</shortName>
    </alternativeName>
</protein>
<accession>Q9ABY6</accession>
<reference key="1">
    <citation type="journal article" date="2001" name="Proc. Natl. Acad. Sci. U.S.A.">
        <title>Complete genome sequence of Caulobacter crescentus.</title>
        <authorList>
            <person name="Nierman W.C."/>
            <person name="Feldblyum T.V."/>
            <person name="Laub M.T."/>
            <person name="Paulsen I.T."/>
            <person name="Nelson K.E."/>
            <person name="Eisen J.A."/>
            <person name="Heidelberg J.F."/>
            <person name="Alley M.R.K."/>
            <person name="Ohta N."/>
            <person name="Maddock J.R."/>
            <person name="Potocka I."/>
            <person name="Nelson W.C."/>
            <person name="Newton A."/>
            <person name="Stephens C."/>
            <person name="Phadke N.D."/>
            <person name="Ely B."/>
            <person name="DeBoy R.T."/>
            <person name="Dodson R.J."/>
            <person name="Durkin A.S."/>
            <person name="Gwinn M.L."/>
            <person name="Haft D.H."/>
            <person name="Kolonay J.F."/>
            <person name="Smit J."/>
            <person name="Craven M.B."/>
            <person name="Khouri H.M."/>
            <person name="Shetty J."/>
            <person name="Berry K.J."/>
            <person name="Utterback T.R."/>
            <person name="Tran K."/>
            <person name="Wolf A.M."/>
            <person name="Vamathevan J.J."/>
            <person name="Ermolaeva M.D."/>
            <person name="White O."/>
            <person name="Salzberg S.L."/>
            <person name="Venter J.C."/>
            <person name="Shapiro L."/>
            <person name="Fraser C.M."/>
        </authorList>
    </citation>
    <scope>NUCLEOTIDE SEQUENCE [LARGE SCALE GENOMIC DNA]</scope>
    <source>
        <strain>ATCC 19089 / CIP 103742 / CB 15</strain>
    </source>
</reference>
<comment type="catalytic activity">
    <reaction evidence="1">
        <text>tRNA(Lys) + L-lysine + ATP = L-lysyl-tRNA(Lys) + AMP + diphosphate</text>
        <dbReference type="Rhea" id="RHEA:20792"/>
        <dbReference type="Rhea" id="RHEA-COMP:9696"/>
        <dbReference type="Rhea" id="RHEA-COMP:9697"/>
        <dbReference type="ChEBI" id="CHEBI:30616"/>
        <dbReference type="ChEBI" id="CHEBI:32551"/>
        <dbReference type="ChEBI" id="CHEBI:33019"/>
        <dbReference type="ChEBI" id="CHEBI:78442"/>
        <dbReference type="ChEBI" id="CHEBI:78529"/>
        <dbReference type="ChEBI" id="CHEBI:456215"/>
        <dbReference type="EC" id="6.1.1.6"/>
    </reaction>
</comment>
<comment type="subcellular location">
    <subcellularLocation>
        <location evidence="1">Cytoplasm</location>
    </subcellularLocation>
</comment>
<comment type="similarity">
    <text evidence="1">Belongs to the class-I aminoacyl-tRNA synthetase family.</text>
</comment>
<proteinExistence type="inferred from homology"/>
<name>SYK_CAUVC</name>
<gene>
    <name evidence="1" type="primary">lysS</name>
    <name type="ordered locus">CC_0084</name>
</gene>
<feature type="chain" id="PRO_0000152740" description="Lysine--tRNA ligase">
    <location>
        <begin position="1"/>
        <end position="552"/>
    </location>
</feature>
<feature type="short sequence motif" description="'HIGH' region">
    <location>
        <begin position="72"/>
        <end position="80"/>
    </location>
</feature>
<feature type="short sequence motif" description="'KMSKS' region">
    <location>
        <begin position="320"/>
        <end position="324"/>
    </location>
</feature>
<feature type="binding site" evidence="1">
    <location>
        <position position="323"/>
    </location>
    <ligand>
        <name>ATP</name>
        <dbReference type="ChEBI" id="CHEBI:30616"/>
    </ligand>
</feature>
<sequence>MFEGLSPLARDARSWPFEQARATIARVLRVRLPDRADQDAAKALIDAGKTDEAVKAYPALAKAVIFETGYGPSGLPHLGTFGEVARTTMVRQAFRALTDEAIPTRLIAFSDDMDGLRKVPDNIENKQPLIEDLGKPLTVVRDPFGTHDSFGAHNNARLRAFLDGFGFEYEFVSSTDCYKGGLFDATLLTALERFDAIQKVMLPTLGEERRATYSPFLPISPSTGKVLQVPTLERNVEKGTIVFEDEDGSKVEVPVTGGHVKMQWKPDWAMRWTALGVDYEMSGKDLIDSVKASGAICKALGGVPPEGFNYELFLDENNQKISKSKGNGLSMEDWLRYGAPESLSYYMFQSPKSAKKLYFDVIPKASDEYLQQLDGFGRQEPAKQLDNPVWHIHGGKPPQQGSPVSFSLMLNLVSAADASTKEILWGFLSRYIPGASPETQPLLDRLAGYAINYYEDFVKPSKVFRAPSDQERAAMLDLLAKLKAMPAGTQDAELIQNEVFEVGKTHGFDPLRAWFQALYEVLLGQSQGPRFGSFAAIFGIDRTVALIEEKLG</sequence>
<organism>
    <name type="scientific">Caulobacter vibrioides (strain ATCC 19089 / CIP 103742 / CB 15)</name>
    <name type="common">Caulobacter crescentus</name>
    <dbReference type="NCBI Taxonomy" id="190650"/>
    <lineage>
        <taxon>Bacteria</taxon>
        <taxon>Pseudomonadati</taxon>
        <taxon>Pseudomonadota</taxon>
        <taxon>Alphaproteobacteria</taxon>
        <taxon>Caulobacterales</taxon>
        <taxon>Caulobacteraceae</taxon>
        <taxon>Caulobacter</taxon>
    </lineage>
</organism>
<dbReference type="EC" id="6.1.1.6" evidence="1"/>
<dbReference type="EMBL" id="AE005673">
    <property type="protein sequence ID" value="AAK22071.1"/>
    <property type="molecule type" value="Genomic_DNA"/>
</dbReference>
<dbReference type="PIR" id="C87259">
    <property type="entry name" value="C87259"/>
</dbReference>
<dbReference type="RefSeq" id="NP_418903.1">
    <property type="nucleotide sequence ID" value="NC_002696.2"/>
</dbReference>
<dbReference type="RefSeq" id="WP_010917973.1">
    <property type="nucleotide sequence ID" value="NC_002696.2"/>
</dbReference>
<dbReference type="SMR" id="Q9ABY6"/>
<dbReference type="STRING" id="190650.CC_0084"/>
<dbReference type="EnsemblBacteria" id="AAK22071">
    <property type="protein sequence ID" value="AAK22071"/>
    <property type="gene ID" value="CC_0084"/>
</dbReference>
<dbReference type="KEGG" id="ccr:CC_0084"/>
<dbReference type="PATRIC" id="fig|190650.5.peg.81"/>
<dbReference type="eggNOG" id="COG1384">
    <property type="taxonomic scope" value="Bacteria"/>
</dbReference>
<dbReference type="HOGENOM" id="CLU_025562_2_0_5"/>
<dbReference type="BioCyc" id="CAULO:CC0084-MONOMER"/>
<dbReference type="Proteomes" id="UP000001816">
    <property type="component" value="Chromosome"/>
</dbReference>
<dbReference type="GO" id="GO:0005737">
    <property type="term" value="C:cytoplasm"/>
    <property type="evidence" value="ECO:0007669"/>
    <property type="project" value="UniProtKB-SubCell"/>
</dbReference>
<dbReference type="GO" id="GO:0005524">
    <property type="term" value="F:ATP binding"/>
    <property type="evidence" value="ECO:0007669"/>
    <property type="project" value="UniProtKB-UniRule"/>
</dbReference>
<dbReference type="GO" id="GO:0004824">
    <property type="term" value="F:lysine-tRNA ligase activity"/>
    <property type="evidence" value="ECO:0007669"/>
    <property type="project" value="UniProtKB-UniRule"/>
</dbReference>
<dbReference type="GO" id="GO:0000049">
    <property type="term" value="F:tRNA binding"/>
    <property type="evidence" value="ECO:0007669"/>
    <property type="project" value="InterPro"/>
</dbReference>
<dbReference type="GO" id="GO:0006430">
    <property type="term" value="P:lysyl-tRNA aminoacylation"/>
    <property type="evidence" value="ECO:0007669"/>
    <property type="project" value="UniProtKB-UniRule"/>
</dbReference>
<dbReference type="Gene3D" id="1.10.10.350">
    <property type="match status" value="1"/>
</dbReference>
<dbReference type="Gene3D" id="3.40.50.620">
    <property type="entry name" value="HUPs"/>
    <property type="match status" value="2"/>
</dbReference>
<dbReference type="HAMAP" id="MF_00177">
    <property type="entry name" value="Lys_tRNA_synth_class1"/>
    <property type="match status" value="1"/>
</dbReference>
<dbReference type="InterPro" id="IPR020751">
    <property type="entry name" value="aa-tRNA-synth_I_codon-bd_sub2"/>
</dbReference>
<dbReference type="InterPro" id="IPR001412">
    <property type="entry name" value="aa-tRNA-synth_I_CS"/>
</dbReference>
<dbReference type="InterPro" id="IPR008925">
    <property type="entry name" value="aa_tRNA-synth_I_cd-bd_sf"/>
</dbReference>
<dbReference type="InterPro" id="IPR002904">
    <property type="entry name" value="Lys-tRNA-ligase"/>
</dbReference>
<dbReference type="InterPro" id="IPR014729">
    <property type="entry name" value="Rossmann-like_a/b/a_fold"/>
</dbReference>
<dbReference type="NCBIfam" id="TIGR00467">
    <property type="entry name" value="lysS_arch"/>
    <property type="match status" value="1"/>
</dbReference>
<dbReference type="NCBIfam" id="NF001968">
    <property type="entry name" value="PRK00750.1-2"/>
    <property type="match status" value="1"/>
</dbReference>
<dbReference type="PANTHER" id="PTHR37940">
    <property type="entry name" value="LYSINE--TRNA LIGASE"/>
    <property type="match status" value="1"/>
</dbReference>
<dbReference type="PANTHER" id="PTHR37940:SF1">
    <property type="entry name" value="LYSINE--TRNA LIGASE"/>
    <property type="match status" value="1"/>
</dbReference>
<dbReference type="Pfam" id="PF01921">
    <property type="entry name" value="tRNA-synt_1f"/>
    <property type="match status" value="1"/>
</dbReference>
<dbReference type="SUPFAM" id="SSF48163">
    <property type="entry name" value="An anticodon-binding domain of class I aminoacyl-tRNA synthetases"/>
    <property type="match status" value="1"/>
</dbReference>
<dbReference type="SUPFAM" id="SSF52374">
    <property type="entry name" value="Nucleotidylyl transferase"/>
    <property type="match status" value="1"/>
</dbReference>
<dbReference type="PROSITE" id="PS00178">
    <property type="entry name" value="AA_TRNA_LIGASE_I"/>
    <property type="match status" value="1"/>
</dbReference>
<evidence type="ECO:0000255" key="1">
    <source>
        <dbReference type="HAMAP-Rule" id="MF_00177"/>
    </source>
</evidence>